<evidence type="ECO:0000255" key="1">
    <source>
        <dbReference type="HAMAP-Rule" id="MF_01224"/>
    </source>
</evidence>
<evidence type="ECO:0000305" key="2"/>
<accession>Q48260</accession>
<accession>Q05188</accession>
<gene>
    <name evidence="1" type="primary">moaC</name>
    <name type="ordered locus">HP_0798</name>
</gene>
<dbReference type="EC" id="4.6.1.17" evidence="1"/>
<dbReference type="EMBL" id="AE000511">
    <property type="protein sequence ID" value="AAD07848.1"/>
    <property type="molecule type" value="Genomic_DNA"/>
</dbReference>
<dbReference type="EMBL" id="X92502">
    <property type="protein sequence ID" value="CAA63245.1"/>
    <property type="molecule type" value="Genomic_DNA"/>
</dbReference>
<dbReference type="EMBL" id="X61574">
    <property type="protein sequence ID" value="CAA43772.1"/>
    <property type="molecule type" value="Genomic_DNA"/>
</dbReference>
<dbReference type="PIR" id="F64619">
    <property type="entry name" value="F64619"/>
</dbReference>
<dbReference type="RefSeq" id="NP_207591.1">
    <property type="nucleotide sequence ID" value="NC_000915.1"/>
</dbReference>
<dbReference type="RefSeq" id="WP_001131513.1">
    <property type="nucleotide sequence ID" value="NC_018939.1"/>
</dbReference>
<dbReference type="SMR" id="Q48260"/>
<dbReference type="DIP" id="DIP-3520N"/>
<dbReference type="FunCoup" id="Q48260">
    <property type="interactions" value="232"/>
</dbReference>
<dbReference type="IntAct" id="Q48260">
    <property type="interactions" value="2"/>
</dbReference>
<dbReference type="MINT" id="Q48260"/>
<dbReference type="STRING" id="85962.HP_0798"/>
<dbReference type="PaxDb" id="85962-C694_04090"/>
<dbReference type="EnsemblBacteria" id="AAD07848">
    <property type="protein sequence ID" value="AAD07848"/>
    <property type="gene ID" value="HP_0798"/>
</dbReference>
<dbReference type="KEGG" id="heo:C694_04090"/>
<dbReference type="KEGG" id="hpy:HP_0798"/>
<dbReference type="PATRIC" id="fig|85962.47.peg.850"/>
<dbReference type="eggNOG" id="COG0315">
    <property type="taxonomic scope" value="Bacteria"/>
</dbReference>
<dbReference type="InParanoid" id="Q48260"/>
<dbReference type="OrthoDB" id="9794429at2"/>
<dbReference type="PhylomeDB" id="Q48260"/>
<dbReference type="UniPathway" id="UPA00344"/>
<dbReference type="Proteomes" id="UP000000429">
    <property type="component" value="Chromosome"/>
</dbReference>
<dbReference type="GO" id="GO:0061799">
    <property type="term" value="F:cyclic pyranopterin monophosphate synthase activity"/>
    <property type="evidence" value="ECO:0007669"/>
    <property type="project" value="UniProtKB-UniRule"/>
</dbReference>
<dbReference type="GO" id="GO:0006777">
    <property type="term" value="P:Mo-molybdopterin cofactor biosynthetic process"/>
    <property type="evidence" value="ECO:0007669"/>
    <property type="project" value="UniProtKB-UniRule"/>
</dbReference>
<dbReference type="CDD" id="cd01420">
    <property type="entry name" value="MoaC_PE"/>
    <property type="match status" value="1"/>
</dbReference>
<dbReference type="Gene3D" id="3.30.70.640">
    <property type="entry name" value="Molybdopterin cofactor biosynthesis C (MoaC) domain"/>
    <property type="match status" value="1"/>
</dbReference>
<dbReference type="HAMAP" id="MF_01224_B">
    <property type="entry name" value="MoaC_B"/>
    <property type="match status" value="1"/>
</dbReference>
<dbReference type="InterPro" id="IPR023045">
    <property type="entry name" value="MoaC"/>
</dbReference>
<dbReference type="InterPro" id="IPR047594">
    <property type="entry name" value="MoaC_bact/euk"/>
</dbReference>
<dbReference type="InterPro" id="IPR036522">
    <property type="entry name" value="MoaC_sf"/>
</dbReference>
<dbReference type="InterPro" id="IPR050105">
    <property type="entry name" value="MoCo_biosynth_MoaA/MoaC"/>
</dbReference>
<dbReference type="InterPro" id="IPR002820">
    <property type="entry name" value="Mopterin_CF_biosynth-C_dom"/>
</dbReference>
<dbReference type="NCBIfam" id="TIGR00581">
    <property type="entry name" value="moaC"/>
    <property type="match status" value="1"/>
</dbReference>
<dbReference type="NCBIfam" id="NF006870">
    <property type="entry name" value="PRK09364.1"/>
    <property type="match status" value="1"/>
</dbReference>
<dbReference type="PANTHER" id="PTHR22960">
    <property type="entry name" value="MOLYBDOPTERIN COFACTOR SYNTHESIS PROTEIN A"/>
    <property type="match status" value="1"/>
</dbReference>
<dbReference type="Pfam" id="PF01967">
    <property type="entry name" value="MoaC"/>
    <property type="match status" value="1"/>
</dbReference>
<dbReference type="SUPFAM" id="SSF55040">
    <property type="entry name" value="Molybdenum cofactor biosynthesis protein C, MoaC"/>
    <property type="match status" value="1"/>
</dbReference>
<sequence>MPLTHLNEENQPKMVDIGDKETTERIALASGRISMNKEAYDAIINHCVKKGPVLQTAIIAGIMGAKKTSELIPMCHPIMLNGVDIDILEEKETCSFKLYARVKTQAKTGVEMEALMSVSIGLLTIYDMVKAIDKSMTISGVMLEHKSGGKSGDYNAKK</sequence>
<name>MOAC_HELPY</name>
<feature type="chain" id="PRO_0000097804" description="Cyclic pyranopterin monophosphate synthase">
    <location>
        <begin position="1"/>
        <end position="158"/>
    </location>
</feature>
<feature type="active site" evidence="1">
    <location>
        <position position="127"/>
    </location>
</feature>
<feature type="binding site" evidence="1">
    <location>
        <begin position="74"/>
        <end position="76"/>
    </location>
    <ligand>
        <name>substrate</name>
    </ligand>
</feature>
<feature type="binding site" evidence="1">
    <location>
        <begin position="112"/>
        <end position="113"/>
    </location>
    <ligand>
        <name>substrate</name>
    </ligand>
</feature>
<feature type="sequence conflict" description="In Ref. 2 and 3." evidence="2" ref="2 3">
    <original>C</original>
    <variation>G</variation>
    <location>
        <position position="47"/>
    </location>
</feature>
<feature type="sequence conflict" description="In Ref. 3; CAA43772." evidence="2" ref="3">
    <original>G</original>
    <variation>A</variation>
    <location>
        <position position="64"/>
    </location>
</feature>
<feature type="sequence conflict" description="In Ref. 3; CAA43772." evidence="2" ref="3">
    <original>T</original>
    <variation>S</variation>
    <location>
        <position position="108"/>
    </location>
</feature>
<feature type="sequence conflict" description="In Ref. 3." evidence="2" ref="3">
    <original>ALMSVSIGLLTIY</original>
    <variation>GANECERRAFNHL</variation>
    <location>
        <begin position="114"/>
        <end position="126"/>
    </location>
</feature>
<feature type="sequence conflict" description="In Ref. 2; CAA63245." evidence="2" ref="2">
    <original>I</original>
    <variation>V</variation>
    <location>
        <position position="120"/>
    </location>
</feature>
<feature type="sequence conflict" description="In Ref. 2; CAA63245." evidence="2" ref="2">
    <original>H</original>
    <variation>Y</variation>
    <location>
        <position position="145"/>
    </location>
</feature>
<proteinExistence type="inferred from homology"/>
<reference key="1">
    <citation type="journal article" date="1997" name="Nature">
        <title>The complete genome sequence of the gastric pathogen Helicobacter pylori.</title>
        <authorList>
            <person name="Tomb J.-F."/>
            <person name="White O."/>
            <person name="Kerlavage A.R."/>
            <person name="Clayton R.A."/>
            <person name="Sutton G.G."/>
            <person name="Fleischmann R.D."/>
            <person name="Ketchum K.A."/>
            <person name="Klenk H.-P."/>
            <person name="Gill S.R."/>
            <person name="Dougherty B.A."/>
            <person name="Nelson K.E."/>
            <person name="Quackenbush J."/>
            <person name="Zhou L."/>
            <person name="Kirkness E.F."/>
            <person name="Peterson S.N."/>
            <person name="Loftus B.J."/>
            <person name="Richardson D.L."/>
            <person name="Dodson R.J."/>
            <person name="Khalak H.G."/>
            <person name="Glodek A."/>
            <person name="McKenney K."/>
            <person name="FitzGerald L.M."/>
            <person name="Lee N."/>
            <person name="Adams M.D."/>
            <person name="Hickey E.K."/>
            <person name="Berg D.E."/>
            <person name="Gocayne J.D."/>
            <person name="Utterback T.R."/>
            <person name="Peterson J.D."/>
            <person name="Kelley J.M."/>
            <person name="Cotton M.D."/>
            <person name="Weidman J.F."/>
            <person name="Fujii C."/>
            <person name="Bowman C."/>
            <person name="Watthey L."/>
            <person name="Wallin E."/>
            <person name="Hayes W.S."/>
            <person name="Borodovsky M."/>
            <person name="Karp P.D."/>
            <person name="Smith H.O."/>
            <person name="Fraser C.M."/>
            <person name="Venter J.C."/>
        </authorList>
    </citation>
    <scope>NUCLEOTIDE SEQUENCE [LARGE SCALE GENOMIC DNA]</scope>
    <source>
        <strain>ATCC 700392 / 26695</strain>
    </source>
</reference>
<reference key="2">
    <citation type="journal article" date="1997" name="J. Bacteriol.">
        <title>A flagellar sheath protein of Helicobacter pylori is identical to HpaA, a putative N-acetylneuraminyllactose-binding hemagglutinin, but is not an adhesin for AGS cells.</title>
        <authorList>
            <person name="Jones A.C."/>
            <person name="Logan R.P."/>
            <person name="Foynes S."/>
            <person name="Cockayne A."/>
            <person name="Wren B.W."/>
            <person name="Penn C.W."/>
        </authorList>
    </citation>
    <scope>NUCLEOTIDE SEQUENCE [GENOMIC DNA] OF 14-158</scope>
    <source>
        <strain>ATCC 43504 / NCTC 11637 / JCM 7653 / RPH 13487</strain>
    </source>
</reference>
<reference key="3">
    <citation type="journal article" date="1993" name="J. Bacteriol.">
        <title>Cloning, nucleotide sequence, and expression of a gene encoding an adhesin subunit protein of Helicobacter pylori.</title>
        <authorList>
            <person name="Evans D.G."/>
            <person name="Karjalainen T.K."/>
            <person name="Evans D.J. Jr."/>
            <person name="Graham D.Y."/>
            <person name="Lee C.-H."/>
        </authorList>
    </citation>
    <scope>NUCLEOTIDE SEQUENCE [GENOMIC DNA] OF 8-126</scope>
    <source>
        <strain>8826</strain>
    </source>
</reference>
<protein>
    <recommendedName>
        <fullName evidence="1">Cyclic pyranopterin monophosphate synthase</fullName>
        <ecNumber evidence="1">4.6.1.17</ecNumber>
    </recommendedName>
    <alternativeName>
        <fullName evidence="1">Molybdenum cofactor biosynthesis protein C</fullName>
    </alternativeName>
</protein>
<organism>
    <name type="scientific">Helicobacter pylori (strain ATCC 700392 / 26695)</name>
    <name type="common">Campylobacter pylori</name>
    <dbReference type="NCBI Taxonomy" id="85962"/>
    <lineage>
        <taxon>Bacteria</taxon>
        <taxon>Pseudomonadati</taxon>
        <taxon>Campylobacterota</taxon>
        <taxon>Epsilonproteobacteria</taxon>
        <taxon>Campylobacterales</taxon>
        <taxon>Helicobacteraceae</taxon>
        <taxon>Helicobacter</taxon>
    </lineage>
</organism>
<comment type="function">
    <text evidence="1">Catalyzes the conversion of (8S)-3',8-cyclo-7,8-dihydroguanosine 5'-triphosphate to cyclic pyranopterin monophosphate (cPMP).</text>
</comment>
<comment type="catalytic activity">
    <reaction evidence="1">
        <text>(8S)-3',8-cyclo-7,8-dihydroguanosine 5'-triphosphate = cyclic pyranopterin phosphate + diphosphate</text>
        <dbReference type="Rhea" id="RHEA:49580"/>
        <dbReference type="ChEBI" id="CHEBI:33019"/>
        <dbReference type="ChEBI" id="CHEBI:59648"/>
        <dbReference type="ChEBI" id="CHEBI:131766"/>
        <dbReference type="EC" id="4.6.1.17"/>
    </reaction>
</comment>
<comment type="pathway">
    <text evidence="1">Cofactor biosynthesis; molybdopterin biosynthesis.</text>
</comment>
<comment type="subunit">
    <text evidence="1">Homohexamer; trimer of dimers.</text>
</comment>
<comment type="similarity">
    <text evidence="1">Belongs to the MoaC family.</text>
</comment>
<keyword id="KW-0456">Lyase</keyword>
<keyword id="KW-0501">Molybdenum cofactor biosynthesis</keyword>
<keyword id="KW-1185">Reference proteome</keyword>